<accession>P0CB62</accession>
<keyword id="KW-0997">Cell inner membrane</keyword>
<keyword id="KW-1003">Cell membrane</keyword>
<keyword id="KW-0903">Direct protein sequencing</keyword>
<keyword id="KW-0472">Membrane</keyword>
<keyword id="KW-1185">Reference proteome</keyword>
<keyword id="KW-0812">Transmembrane</keyword>
<keyword id="KW-1133">Transmembrane helix</keyword>
<protein>
    <recommendedName>
        <fullName>Protein YmiA</fullName>
    </recommendedName>
</protein>
<feature type="chain" id="PRO_0000388331" description="Protein YmiA">
    <location>
        <begin position="1"/>
        <end position="46"/>
    </location>
</feature>
<feature type="transmembrane region" description="Helical" evidence="1">
    <location>
        <begin position="22"/>
        <end position="42"/>
    </location>
</feature>
<gene>
    <name type="primary">ymiA</name>
    <name type="ordered locus">b4522</name>
    <name type="ordered locus">JW1267.1</name>
</gene>
<comment type="subcellular location">
    <subcellularLocation>
        <location evidence="3">Cell inner membrane</location>
        <topology evidence="3">Single-pass membrane protein</topology>
    </subcellularLocation>
</comment>
<comment type="induction">
    <text evidence="2">Constitutively expressed (at protein level).</text>
</comment>
<name>YMIA_ECOLI</name>
<sequence length="46" mass="5337">MRLAMPSGNQEPRRDPELKRKAWLAVFLGSALFWVVVALLIWKVWG</sequence>
<evidence type="ECO:0000255" key="1"/>
<evidence type="ECO:0000269" key="2">
    <source>
    </source>
</evidence>
<evidence type="ECO:0000305" key="3"/>
<proteinExistence type="evidence at protein level"/>
<reference key="1">
    <citation type="journal article" date="1997" name="Science">
        <title>The complete genome sequence of Escherichia coli K-12.</title>
        <authorList>
            <person name="Blattner F.R."/>
            <person name="Plunkett G. III"/>
            <person name="Bloch C.A."/>
            <person name="Perna N.T."/>
            <person name="Burland V."/>
            <person name="Riley M."/>
            <person name="Collado-Vides J."/>
            <person name="Glasner J.D."/>
            <person name="Rode C.K."/>
            <person name="Mayhew G.F."/>
            <person name="Gregor J."/>
            <person name="Davis N.W."/>
            <person name="Kirkpatrick H.A."/>
            <person name="Goeden M.A."/>
            <person name="Rose D.J."/>
            <person name="Mau B."/>
            <person name="Shao Y."/>
        </authorList>
    </citation>
    <scope>NUCLEOTIDE SEQUENCE [LARGE SCALE GENOMIC DNA]</scope>
    <source>
        <strain>K12 / MG1655 / ATCC 47076</strain>
    </source>
</reference>
<reference key="2">
    <citation type="journal article" date="2006" name="Mol. Syst. Biol.">
        <title>Highly accurate genome sequences of Escherichia coli K-12 strains MG1655 and W3110.</title>
        <authorList>
            <person name="Hayashi K."/>
            <person name="Morooka N."/>
            <person name="Yamamoto Y."/>
            <person name="Fujita K."/>
            <person name="Isono K."/>
            <person name="Choi S."/>
            <person name="Ohtsubo E."/>
            <person name="Baba T."/>
            <person name="Wanner B.L."/>
            <person name="Mori H."/>
            <person name="Horiuchi T."/>
        </authorList>
    </citation>
    <scope>NUCLEOTIDE SEQUENCE [LARGE SCALE GENOMIC DNA]</scope>
    <source>
        <strain>K12 / W3110 / ATCC 27325 / DSM 5911</strain>
    </source>
</reference>
<reference key="3">
    <citation type="journal article" date="2013" name="Mol. Cell. Proteomics">
        <title>Deep coverage of the Escherichia coli proteome enables the assessment of false discovery rates in simple proteogenomic experiments.</title>
        <authorList>
            <person name="Krug K."/>
            <person name="Carpy A."/>
            <person name="Behrends G."/>
            <person name="Matic K."/>
            <person name="Soares N.C."/>
            <person name="Macek B."/>
        </authorList>
    </citation>
    <scope>PROTEIN SEQUENCE OF 3-13</scope>
    <source>
        <strain>K12 / BW25113</strain>
    </source>
</reference>
<reference key="4">
    <citation type="journal article" date="2008" name="Mol. Microbiol.">
        <title>Small membrane proteins found by comparative genomics and ribosome binding site models.</title>
        <authorList>
            <person name="Hemm M.R."/>
            <person name="Paul B.J."/>
            <person name="Schneider T.D."/>
            <person name="Storz G."/>
            <person name="Rudd K.E."/>
        </authorList>
    </citation>
    <scope>SUBCELLULAR LOCATION</scope>
    <scope>INDUCTION</scope>
    <source>
        <strain>K12 / MG1655 / ATCC 47076</strain>
    </source>
</reference>
<reference key="5">
    <citation type="journal article" date="2019" name="MBio">
        <title>Identifying small proteins by ribosome profiling with stalled initiation complexes.</title>
        <authorList>
            <person name="Weaver J."/>
            <person name="Mohammad F."/>
            <person name="Buskirk A.R."/>
            <person name="Storz G."/>
        </authorList>
    </citation>
    <scope>POSSIBLE FUNCTION</scope>
    <scope>SEQUENCE REVISION TO N-TERMINUS</scope>
    <source>
        <strain>K12 / MG1655 / ATCC 47076</strain>
    </source>
</reference>
<organism>
    <name type="scientific">Escherichia coli (strain K12)</name>
    <dbReference type="NCBI Taxonomy" id="83333"/>
    <lineage>
        <taxon>Bacteria</taxon>
        <taxon>Pseudomonadati</taxon>
        <taxon>Pseudomonadota</taxon>
        <taxon>Gammaproteobacteria</taxon>
        <taxon>Enterobacterales</taxon>
        <taxon>Enterobacteriaceae</taxon>
        <taxon>Escherichia</taxon>
    </lineage>
</organism>
<dbReference type="EMBL" id="U00096">
    <property type="protein sequence ID" value="ABD18655.3"/>
    <property type="molecule type" value="Genomic_DNA"/>
</dbReference>
<dbReference type="EMBL" id="AP009048">
    <property type="status" value="NOT_ANNOTATED_CDS"/>
    <property type="molecule type" value="Genomic_DNA"/>
</dbReference>
<dbReference type="RefSeq" id="YP_588449.2">
    <property type="nucleotide sequence ID" value="NC_000913.3"/>
</dbReference>
<dbReference type="SMR" id="P0CB62"/>
<dbReference type="FunCoup" id="P0CB62">
    <property type="interactions" value="18"/>
</dbReference>
<dbReference type="IntAct" id="P0CB62">
    <property type="interactions" value="3"/>
</dbReference>
<dbReference type="STRING" id="511145.b4522"/>
<dbReference type="PaxDb" id="511145-b4522"/>
<dbReference type="EnsemblBacteria" id="ABD18655">
    <property type="protein sequence ID" value="ABD18655"/>
    <property type="gene ID" value="b4522"/>
</dbReference>
<dbReference type="GeneID" id="1450256"/>
<dbReference type="KEGG" id="eco:b4522"/>
<dbReference type="PATRIC" id="fig|511145.12.peg.1325"/>
<dbReference type="eggNOG" id="ENOG5033ERG">
    <property type="taxonomic scope" value="Bacteria"/>
</dbReference>
<dbReference type="InParanoid" id="P0CB62"/>
<dbReference type="BioCyc" id="EcoCyc:MONOMER0-2885"/>
<dbReference type="PRO" id="PR:P0CB62"/>
<dbReference type="Proteomes" id="UP000000625">
    <property type="component" value="Chromosome"/>
</dbReference>
<dbReference type="GO" id="GO:0005886">
    <property type="term" value="C:plasma membrane"/>
    <property type="evidence" value="ECO:0007669"/>
    <property type="project" value="UniProtKB-SubCell"/>
</dbReference>
<dbReference type="InterPro" id="IPR047744">
    <property type="entry name" value="YmiA_put-like"/>
</dbReference>
<dbReference type="NCBIfam" id="NF000536">
    <property type="entry name" value="YmiA"/>
    <property type="match status" value="1"/>
</dbReference>
<dbReference type="Pfam" id="PF22868">
    <property type="entry name" value="YmiA-like"/>
    <property type="match status" value="1"/>
</dbReference>